<sequence length="192" mass="22121">MMEVPREIIEKLEIFQKLVKKWNKSINLVSDNTIHNFWQRHILDSLQLMQYIDNKEIHLVDIGSGAGFPGIVLSIAGVAKVSLIEADLRKCIFLEKASKISNNNIQIINQRIEKVEIDCSILTCRAFSKLNTIFNCIKNISVQEKFLLLKGKNYLTEIVEAKEMWLFDYLIHQSITCEEGKILEVSNLTKII</sequence>
<proteinExistence type="inferred from homology"/>
<dbReference type="EC" id="2.1.1.170" evidence="1"/>
<dbReference type="EMBL" id="CP000053">
    <property type="protein sequence ID" value="AAY60969.1"/>
    <property type="molecule type" value="Genomic_DNA"/>
</dbReference>
<dbReference type="SMR" id="Q4UN89"/>
<dbReference type="STRING" id="315456.RF_0118"/>
<dbReference type="KEGG" id="rfe:RF_0118"/>
<dbReference type="eggNOG" id="COG0357">
    <property type="taxonomic scope" value="Bacteria"/>
</dbReference>
<dbReference type="HOGENOM" id="CLU_065341_1_1_5"/>
<dbReference type="Proteomes" id="UP000008548">
    <property type="component" value="Chromosome"/>
</dbReference>
<dbReference type="GO" id="GO:0005829">
    <property type="term" value="C:cytosol"/>
    <property type="evidence" value="ECO:0007669"/>
    <property type="project" value="TreeGrafter"/>
</dbReference>
<dbReference type="GO" id="GO:0070043">
    <property type="term" value="F:rRNA (guanine-N7-)-methyltransferase activity"/>
    <property type="evidence" value="ECO:0007669"/>
    <property type="project" value="UniProtKB-UniRule"/>
</dbReference>
<dbReference type="Gene3D" id="3.40.50.150">
    <property type="entry name" value="Vaccinia Virus protein VP39"/>
    <property type="match status" value="1"/>
</dbReference>
<dbReference type="HAMAP" id="MF_00074">
    <property type="entry name" value="16SrRNA_methyltr_G"/>
    <property type="match status" value="1"/>
</dbReference>
<dbReference type="InterPro" id="IPR003682">
    <property type="entry name" value="rRNA_ssu_MeTfrase_G"/>
</dbReference>
<dbReference type="InterPro" id="IPR029063">
    <property type="entry name" value="SAM-dependent_MTases_sf"/>
</dbReference>
<dbReference type="NCBIfam" id="TIGR00138">
    <property type="entry name" value="rsmG_gidB"/>
    <property type="match status" value="1"/>
</dbReference>
<dbReference type="PANTHER" id="PTHR31760">
    <property type="entry name" value="S-ADENOSYL-L-METHIONINE-DEPENDENT METHYLTRANSFERASES SUPERFAMILY PROTEIN"/>
    <property type="match status" value="1"/>
</dbReference>
<dbReference type="PANTHER" id="PTHR31760:SF0">
    <property type="entry name" value="S-ADENOSYL-L-METHIONINE-DEPENDENT METHYLTRANSFERASES SUPERFAMILY PROTEIN"/>
    <property type="match status" value="1"/>
</dbReference>
<dbReference type="Pfam" id="PF02527">
    <property type="entry name" value="GidB"/>
    <property type="match status" value="1"/>
</dbReference>
<dbReference type="PIRSF" id="PIRSF003078">
    <property type="entry name" value="GidB"/>
    <property type="match status" value="1"/>
</dbReference>
<dbReference type="SUPFAM" id="SSF53335">
    <property type="entry name" value="S-adenosyl-L-methionine-dependent methyltransferases"/>
    <property type="match status" value="1"/>
</dbReference>
<keyword id="KW-0963">Cytoplasm</keyword>
<keyword id="KW-0489">Methyltransferase</keyword>
<keyword id="KW-0698">rRNA processing</keyword>
<keyword id="KW-0949">S-adenosyl-L-methionine</keyword>
<keyword id="KW-0808">Transferase</keyword>
<name>RSMG_RICFE</name>
<feature type="chain" id="PRO_0000184318" description="Ribosomal RNA small subunit methyltransferase G">
    <location>
        <begin position="1"/>
        <end position="192"/>
    </location>
</feature>
<feature type="binding site" evidence="1">
    <location>
        <position position="63"/>
    </location>
    <ligand>
        <name>S-adenosyl-L-methionine</name>
        <dbReference type="ChEBI" id="CHEBI:59789"/>
    </ligand>
</feature>
<feature type="binding site" evidence="1">
    <location>
        <position position="68"/>
    </location>
    <ligand>
        <name>S-adenosyl-L-methionine</name>
        <dbReference type="ChEBI" id="CHEBI:59789"/>
    </ligand>
</feature>
<feature type="binding site" evidence="1">
    <location>
        <begin position="112"/>
        <end position="113"/>
    </location>
    <ligand>
        <name>S-adenosyl-L-methionine</name>
        <dbReference type="ChEBI" id="CHEBI:59789"/>
    </ligand>
</feature>
<feature type="binding site" evidence="1">
    <location>
        <position position="125"/>
    </location>
    <ligand>
        <name>S-adenosyl-L-methionine</name>
        <dbReference type="ChEBI" id="CHEBI:59789"/>
    </ligand>
</feature>
<gene>
    <name evidence="1" type="primary">rsmG</name>
    <name type="ordered locus">RF_0118</name>
</gene>
<accession>Q4UN89</accession>
<reference key="1">
    <citation type="journal article" date="2005" name="PLoS Biol.">
        <title>The genome sequence of Rickettsia felis identifies the first putative conjugative plasmid in an obligate intracellular parasite.</title>
        <authorList>
            <person name="Ogata H."/>
            <person name="Renesto P."/>
            <person name="Audic S."/>
            <person name="Robert C."/>
            <person name="Blanc G."/>
            <person name="Fournier P.-E."/>
            <person name="Parinello H."/>
            <person name="Claverie J.-M."/>
            <person name="Raoult D."/>
        </authorList>
    </citation>
    <scope>NUCLEOTIDE SEQUENCE [LARGE SCALE GENOMIC DNA]</scope>
    <source>
        <strain>ATCC VR-1525 / URRWXCal2</strain>
    </source>
</reference>
<evidence type="ECO:0000255" key="1">
    <source>
        <dbReference type="HAMAP-Rule" id="MF_00074"/>
    </source>
</evidence>
<comment type="function">
    <text evidence="1">Specifically methylates the N7 position of guanine in position 527 of 16S rRNA.</text>
</comment>
<comment type="catalytic activity">
    <reaction evidence="1">
        <text>guanosine(527) in 16S rRNA + S-adenosyl-L-methionine = N(7)-methylguanosine(527) in 16S rRNA + S-adenosyl-L-homocysteine</text>
        <dbReference type="Rhea" id="RHEA:42732"/>
        <dbReference type="Rhea" id="RHEA-COMP:10209"/>
        <dbReference type="Rhea" id="RHEA-COMP:10210"/>
        <dbReference type="ChEBI" id="CHEBI:57856"/>
        <dbReference type="ChEBI" id="CHEBI:59789"/>
        <dbReference type="ChEBI" id="CHEBI:74269"/>
        <dbReference type="ChEBI" id="CHEBI:74480"/>
        <dbReference type="EC" id="2.1.1.170"/>
    </reaction>
</comment>
<comment type="subcellular location">
    <subcellularLocation>
        <location evidence="1">Cytoplasm</location>
    </subcellularLocation>
</comment>
<comment type="similarity">
    <text evidence="1">Belongs to the methyltransferase superfamily. RNA methyltransferase RsmG family.</text>
</comment>
<organism>
    <name type="scientific">Rickettsia felis (strain ATCC VR-1525 / URRWXCal2)</name>
    <name type="common">Rickettsia azadi</name>
    <dbReference type="NCBI Taxonomy" id="315456"/>
    <lineage>
        <taxon>Bacteria</taxon>
        <taxon>Pseudomonadati</taxon>
        <taxon>Pseudomonadota</taxon>
        <taxon>Alphaproteobacteria</taxon>
        <taxon>Rickettsiales</taxon>
        <taxon>Rickettsiaceae</taxon>
        <taxon>Rickettsieae</taxon>
        <taxon>Rickettsia</taxon>
        <taxon>spotted fever group</taxon>
    </lineage>
</organism>
<protein>
    <recommendedName>
        <fullName evidence="1">Ribosomal RNA small subunit methyltransferase G</fullName>
        <ecNumber evidence="1">2.1.1.170</ecNumber>
    </recommendedName>
    <alternativeName>
        <fullName evidence="1">16S rRNA 7-methylguanosine methyltransferase</fullName>
        <shortName evidence="1">16S rRNA m7G methyltransferase</shortName>
    </alternativeName>
</protein>